<proteinExistence type="evidence at protein level"/>
<evidence type="ECO:0000250" key="1"/>
<evidence type="ECO:0000255" key="2">
    <source>
        <dbReference type="PROSITE-ProRule" id="PRU00166"/>
    </source>
</evidence>
<evidence type="ECO:0000255" key="3">
    <source>
        <dbReference type="PROSITE-ProRule" id="PRU00503"/>
    </source>
</evidence>
<evidence type="ECO:0000256" key="4">
    <source>
        <dbReference type="SAM" id="MobiDB-lite"/>
    </source>
</evidence>
<evidence type="ECO:0000269" key="5">
    <source>
    </source>
</evidence>
<evidence type="ECO:0000269" key="6">
    <source>
    </source>
</evidence>
<evidence type="ECO:0000269" key="7">
    <source>
    </source>
</evidence>
<evidence type="ECO:0000305" key="8"/>
<evidence type="ECO:0007744" key="9">
    <source>
    </source>
</evidence>
<evidence type="ECO:0007744" key="10">
    <source>
    </source>
</evidence>
<evidence type="ECO:0007744" key="11">
    <source>
    </source>
</evidence>
<accession>Q3U0S6</accession>
<accession>E9QLI7</accession>
<accession>Q6GQW4</accession>
<organism>
    <name type="scientific">Mus musculus</name>
    <name type="common">Mouse</name>
    <dbReference type="NCBI Taxonomy" id="10090"/>
    <lineage>
        <taxon>Eukaryota</taxon>
        <taxon>Metazoa</taxon>
        <taxon>Chordata</taxon>
        <taxon>Craniata</taxon>
        <taxon>Vertebrata</taxon>
        <taxon>Euteleostomi</taxon>
        <taxon>Mammalia</taxon>
        <taxon>Eutheria</taxon>
        <taxon>Euarchontoglires</taxon>
        <taxon>Glires</taxon>
        <taxon>Rodentia</taxon>
        <taxon>Myomorpha</taxon>
        <taxon>Muroidea</taxon>
        <taxon>Muridae</taxon>
        <taxon>Murinae</taxon>
        <taxon>Mus</taxon>
        <taxon>Mus</taxon>
    </lineage>
</organism>
<comment type="function">
    <text evidence="1 6 7">Required for the proper formation of vascular structures that develop via both vasculogenesis and angiogenesis. Acts as a critical and vascular-specific regulator of GTPase signaling, cell architecture, and adhesion, which is essential for endothelial cell morphogenesis and blood vessel tubulogenesis. Regulates the activity of Rho GTPases in part by recruiting ARHGAP29 and suppressing RhoA signaling and dampening ROCK and MYH9 activities in endothelial cells. May act as effector for Golgi-bound HRAS and other Ras-like proteins. May promote HRAS-mediated transformation. Negative regulator of amino acid starvation-induced autophagy (By similarity).</text>
</comment>
<comment type="subunit">
    <text evidence="1 7">Interacts with Ras family members that have been activated by GTP binding. Interacts with HRAS, RAP1A, RAP2, RRAS, RAF1 and RRAS2 (By similarity). Interacts with MYH9 and ARHGAP29.</text>
</comment>
<comment type="subcellular location">
    <subcellularLocation>
        <location evidence="1">Cytoplasm</location>
        <location evidence="1">Perinuclear region</location>
    </subcellularLocation>
    <subcellularLocation>
        <location evidence="1">Golgi apparatus</location>
        <location evidence="1">Golgi stack</location>
    </subcellularLocation>
    <text evidence="1">Associated with perinuclear vesicles. Is recruited to Golgi stacks by activated HRAS (By similarity).</text>
</comment>
<comment type="tissue specificity">
    <text evidence="5">Detected in kidney, heart, skeletal muscle, small intestine and lung.</text>
</comment>
<comment type="developmental stage">
    <text evidence="6">Specifically expressed in the endothelium of the developing blood vessels in embryos.</text>
</comment>
<sequence>MLSGERKEGGSPRFGKLHLPVGLWINSPRKQLAKLGRRWPSAASVKSSSSDTGSRSSEPLPPPPPPPHVELRRVGAVKAAGGASGSRAKRISQLFRGSGAGGAGGPGTPGGAQRWASEKKLPELAAGVAPEPPLPTRAAVPPGVLKIFASGLASGANYKSVLATERSTARELVAEALERYGLTGGRGAGDSGCVDAYALCDALGRPAVGVGGGEWRAEHLRVLADAERPLLVQDLWRARPGWARRFELRGREEARRLEQEAFGAADADGTNAPSWRTQKNRSRAASGGAALASPGPGSGSGTPTGSGGKERSENLSLRRSVSELSLQGRRRRQQERRQQALSMAPGAADAQMVPTDPGDFDQLTQCLIQAPSNRPYFLLLQGYQDAQDFVVYVMTREQHVFGRGGPSSSRGGSPAPYVDTFLNAPDILPRHCTVRAGPEPPAMVRPSRGAPVTHNGCLLLREAELHPGDLLGLGEHFLFMYKDPRSGGSGPARPSWLPARPGAAPPGPGWAFSCRLCGRGLQERGEALAAYLDGREPVLRFRPREEEALLGEIVRAAASGAGDLPPLGPATLLALCVQHSARELELGHLPRLLGRLARLIKEAVWEKIKEIGDRQPENHPEGVPEVPLTPEAVSVELRPLILWMANTTELLSFVQEKVLEMEKEADQEGLSSDPQLCNDLELCDEALALLDEVIMCTFQQSVYYLTKTLYSTLPALLDSNPFTAGAELPGPGAELEAMPPGLRPTLGVFQAALELTSQCELHPDLVSQTFGYLFFFSNASLLNSLMERGQGRPFYQWSRAVQIRTNLDLVLDWLQGAGLGDIATEFFRKLSIAVNLLCVPRTSLLKASWSSLRTDYPTLTPAQLHHLLSHYQLGPGRGPPPAWDPPPAERDAVDTGDIFESFSSHPPLILPLGSSRLRLTGPVTDDALHRELRRLRRLLWDLEQQELPANHRHGPPVASTP</sequence>
<dbReference type="EMBL" id="AK156602">
    <property type="protein sequence ID" value="BAE33775.1"/>
    <property type="molecule type" value="mRNA"/>
</dbReference>
<dbReference type="EMBL" id="AC149057">
    <property type="status" value="NOT_ANNOTATED_CDS"/>
    <property type="molecule type" value="Genomic_DNA"/>
</dbReference>
<dbReference type="EMBL" id="BC072584">
    <property type="protein sequence ID" value="AAH72584.1"/>
    <property type="molecule type" value="mRNA"/>
</dbReference>
<dbReference type="CCDS" id="CCDS21256.1"/>
<dbReference type="RefSeq" id="NP_082820.1">
    <property type="nucleotide sequence ID" value="NM_028544.1"/>
</dbReference>
<dbReference type="SMR" id="Q3U0S6"/>
<dbReference type="BioGRID" id="213746">
    <property type="interactions" value="1"/>
</dbReference>
<dbReference type="FunCoup" id="Q3U0S6">
    <property type="interactions" value="36"/>
</dbReference>
<dbReference type="STRING" id="10090.ENSMUSP00000062429"/>
<dbReference type="GlyGen" id="Q3U0S6">
    <property type="glycosylation" value="2 sites, 1 N-linked glycan (1 site)"/>
</dbReference>
<dbReference type="iPTMnet" id="Q3U0S6"/>
<dbReference type="PhosphoSitePlus" id="Q3U0S6"/>
<dbReference type="jPOST" id="Q3U0S6"/>
<dbReference type="PaxDb" id="10090-ENSMUSP00000062429"/>
<dbReference type="ProteomicsDB" id="253168"/>
<dbReference type="Antibodypedia" id="31787">
    <property type="antibodies" value="108 antibodies from 30 providers"/>
</dbReference>
<dbReference type="DNASU" id="69903"/>
<dbReference type="Ensembl" id="ENSMUST00000057927.10">
    <property type="protein sequence ID" value="ENSMUSP00000062429.8"/>
    <property type="gene ID" value="ENSMUSG00000044562.13"/>
</dbReference>
<dbReference type="GeneID" id="69903"/>
<dbReference type="KEGG" id="mmu:69903"/>
<dbReference type="UCSC" id="uc009gwi.1">
    <property type="organism name" value="mouse"/>
</dbReference>
<dbReference type="AGR" id="MGI:1917153"/>
<dbReference type="CTD" id="54922"/>
<dbReference type="MGI" id="MGI:1917153">
    <property type="gene designation" value="Rasip1"/>
</dbReference>
<dbReference type="VEuPathDB" id="HostDB:ENSMUSG00000044562"/>
<dbReference type="eggNOG" id="KOG0160">
    <property type="taxonomic scope" value="Eukaryota"/>
</dbReference>
<dbReference type="GeneTree" id="ENSGT00940000160072"/>
<dbReference type="HOGENOM" id="CLU_010386_1_0_1"/>
<dbReference type="InParanoid" id="Q3U0S6"/>
<dbReference type="OMA" id="MRPATKN"/>
<dbReference type="OrthoDB" id="3908708at2759"/>
<dbReference type="PhylomeDB" id="Q3U0S6"/>
<dbReference type="TreeFam" id="TF315987"/>
<dbReference type="BioGRID-ORCS" id="69903">
    <property type="hits" value="4 hits in 76 CRISPR screens"/>
</dbReference>
<dbReference type="ChiTaRS" id="Rasip1">
    <property type="organism name" value="mouse"/>
</dbReference>
<dbReference type="PRO" id="PR:Q3U0S6"/>
<dbReference type="Proteomes" id="UP000000589">
    <property type="component" value="Chromosome 7"/>
</dbReference>
<dbReference type="RNAct" id="Q3U0S6">
    <property type="molecule type" value="protein"/>
</dbReference>
<dbReference type="Bgee" id="ENSMUSG00000044562">
    <property type="expression patterns" value="Expressed in cardiovascular system endothelium and 157 other cell types or tissues"/>
</dbReference>
<dbReference type="GO" id="GO:0005911">
    <property type="term" value="C:cell-cell junction"/>
    <property type="evidence" value="ECO:0007669"/>
    <property type="project" value="Ensembl"/>
</dbReference>
<dbReference type="GO" id="GO:0005794">
    <property type="term" value="C:Golgi apparatus"/>
    <property type="evidence" value="ECO:0000266"/>
    <property type="project" value="MGI"/>
</dbReference>
<dbReference type="GO" id="GO:0005795">
    <property type="term" value="C:Golgi stack"/>
    <property type="evidence" value="ECO:0007669"/>
    <property type="project" value="UniProtKB-SubCell"/>
</dbReference>
<dbReference type="GO" id="GO:0048471">
    <property type="term" value="C:perinuclear region of cytoplasm"/>
    <property type="evidence" value="ECO:0000266"/>
    <property type="project" value="MGI"/>
</dbReference>
<dbReference type="GO" id="GO:0032991">
    <property type="term" value="C:protein-containing complex"/>
    <property type="evidence" value="ECO:0007669"/>
    <property type="project" value="Ensembl"/>
</dbReference>
<dbReference type="GO" id="GO:0042803">
    <property type="term" value="F:protein homodimerization activity"/>
    <property type="evidence" value="ECO:0007669"/>
    <property type="project" value="Ensembl"/>
</dbReference>
<dbReference type="GO" id="GO:0031267">
    <property type="term" value="F:small GTPase binding"/>
    <property type="evidence" value="ECO:0000266"/>
    <property type="project" value="MGI"/>
</dbReference>
<dbReference type="GO" id="GO:0001525">
    <property type="term" value="P:angiogenesis"/>
    <property type="evidence" value="ECO:0000315"/>
    <property type="project" value="UniProtKB"/>
</dbReference>
<dbReference type="GO" id="GO:0048754">
    <property type="term" value="P:branching morphogenesis of an epithelial tube"/>
    <property type="evidence" value="ECO:0000315"/>
    <property type="project" value="UniProtKB"/>
</dbReference>
<dbReference type="GO" id="GO:0010507">
    <property type="term" value="P:negative regulation of autophagy"/>
    <property type="evidence" value="ECO:0007669"/>
    <property type="project" value="Ensembl"/>
</dbReference>
<dbReference type="GO" id="GO:1905709">
    <property type="term" value="P:negative regulation of membrane permeability"/>
    <property type="evidence" value="ECO:0007669"/>
    <property type="project" value="Ensembl"/>
</dbReference>
<dbReference type="GO" id="GO:0035024">
    <property type="term" value="P:negative regulation of Rho protein signal transduction"/>
    <property type="evidence" value="ECO:0007669"/>
    <property type="project" value="Ensembl"/>
</dbReference>
<dbReference type="GO" id="GO:0008284">
    <property type="term" value="P:positive regulation of cell population proliferation"/>
    <property type="evidence" value="ECO:0000266"/>
    <property type="project" value="MGI"/>
</dbReference>
<dbReference type="GO" id="GO:0033625">
    <property type="term" value="P:positive regulation of integrin activation"/>
    <property type="evidence" value="ECO:0007669"/>
    <property type="project" value="Ensembl"/>
</dbReference>
<dbReference type="GO" id="GO:0043087">
    <property type="term" value="P:regulation of GTPase activity"/>
    <property type="evidence" value="ECO:0000315"/>
    <property type="project" value="UniProtKB"/>
</dbReference>
<dbReference type="GO" id="GO:0007165">
    <property type="term" value="P:signal transduction"/>
    <property type="evidence" value="ECO:0007669"/>
    <property type="project" value="InterPro"/>
</dbReference>
<dbReference type="GO" id="GO:0001570">
    <property type="term" value="P:vasculogenesis"/>
    <property type="evidence" value="ECO:0000315"/>
    <property type="project" value="UniProtKB"/>
</dbReference>
<dbReference type="CDD" id="cd22734">
    <property type="entry name" value="FHA_RAIN"/>
    <property type="match status" value="1"/>
</dbReference>
<dbReference type="CDD" id="cd15472">
    <property type="entry name" value="Myo5p-like_CBD_Rasip1"/>
    <property type="match status" value="1"/>
</dbReference>
<dbReference type="FunFam" id="2.60.200.20:FF:000036">
    <property type="entry name" value="Ras interacting protein 1"/>
    <property type="match status" value="1"/>
</dbReference>
<dbReference type="Gene3D" id="2.60.200.20">
    <property type="match status" value="1"/>
</dbReference>
<dbReference type="Gene3D" id="3.10.20.90">
    <property type="entry name" value="Phosphatidylinositol 3-kinase Catalytic Subunit, Chain A, domain 1"/>
    <property type="match status" value="1"/>
</dbReference>
<dbReference type="InterPro" id="IPR037983">
    <property type="entry name" value="CBD_Rasip1/Radil"/>
</dbReference>
<dbReference type="InterPro" id="IPR002710">
    <property type="entry name" value="Dilute_dom"/>
</dbReference>
<dbReference type="InterPro" id="IPR000159">
    <property type="entry name" value="RA_dom"/>
</dbReference>
<dbReference type="InterPro" id="IPR008984">
    <property type="entry name" value="SMAD_FHA_dom_sf"/>
</dbReference>
<dbReference type="InterPro" id="IPR029071">
    <property type="entry name" value="Ubiquitin-like_domsf"/>
</dbReference>
<dbReference type="InterPro" id="IPR052072">
    <property type="entry name" value="Vascular_dev_regulator"/>
</dbReference>
<dbReference type="PANTHER" id="PTHR16027">
    <property type="entry name" value="DILUTE DOMAIN-CONTAINING PROTEIN YPR089W"/>
    <property type="match status" value="1"/>
</dbReference>
<dbReference type="PANTHER" id="PTHR16027:SF4">
    <property type="entry name" value="RAS-INTERACTING PROTEIN 1"/>
    <property type="match status" value="1"/>
</dbReference>
<dbReference type="Pfam" id="PF01843">
    <property type="entry name" value="DIL"/>
    <property type="match status" value="1"/>
</dbReference>
<dbReference type="Pfam" id="PF00788">
    <property type="entry name" value="RA"/>
    <property type="match status" value="1"/>
</dbReference>
<dbReference type="SMART" id="SM01132">
    <property type="entry name" value="DIL"/>
    <property type="match status" value="1"/>
</dbReference>
<dbReference type="SMART" id="SM00314">
    <property type="entry name" value="RA"/>
    <property type="match status" value="1"/>
</dbReference>
<dbReference type="SUPFAM" id="SSF49879">
    <property type="entry name" value="SMAD/FHA domain"/>
    <property type="match status" value="1"/>
</dbReference>
<dbReference type="SUPFAM" id="SSF54236">
    <property type="entry name" value="Ubiquitin-like"/>
    <property type="match status" value="1"/>
</dbReference>
<dbReference type="PROSITE" id="PS51126">
    <property type="entry name" value="DILUTE"/>
    <property type="match status" value="1"/>
</dbReference>
<dbReference type="PROSITE" id="PS50200">
    <property type="entry name" value="RA"/>
    <property type="match status" value="1"/>
</dbReference>
<keyword id="KW-0037">Angiogenesis</keyword>
<keyword id="KW-0963">Cytoplasm</keyword>
<keyword id="KW-0333">Golgi apparatus</keyword>
<keyword id="KW-0488">Methylation</keyword>
<keyword id="KW-0597">Phosphoprotein</keyword>
<keyword id="KW-1185">Reference proteome</keyword>
<name>RAIN_MOUSE</name>
<reference key="1">
    <citation type="journal article" date="2005" name="Science">
        <title>The transcriptional landscape of the mammalian genome.</title>
        <authorList>
            <person name="Carninci P."/>
            <person name="Kasukawa T."/>
            <person name="Katayama S."/>
            <person name="Gough J."/>
            <person name="Frith M.C."/>
            <person name="Maeda N."/>
            <person name="Oyama R."/>
            <person name="Ravasi T."/>
            <person name="Lenhard B."/>
            <person name="Wells C."/>
            <person name="Kodzius R."/>
            <person name="Shimokawa K."/>
            <person name="Bajic V.B."/>
            <person name="Brenner S.E."/>
            <person name="Batalov S."/>
            <person name="Forrest A.R."/>
            <person name="Zavolan M."/>
            <person name="Davis M.J."/>
            <person name="Wilming L.G."/>
            <person name="Aidinis V."/>
            <person name="Allen J.E."/>
            <person name="Ambesi-Impiombato A."/>
            <person name="Apweiler R."/>
            <person name="Aturaliya R.N."/>
            <person name="Bailey T.L."/>
            <person name="Bansal M."/>
            <person name="Baxter L."/>
            <person name="Beisel K.W."/>
            <person name="Bersano T."/>
            <person name="Bono H."/>
            <person name="Chalk A.M."/>
            <person name="Chiu K.P."/>
            <person name="Choudhary V."/>
            <person name="Christoffels A."/>
            <person name="Clutterbuck D.R."/>
            <person name="Crowe M.L."/>
            <person name="Dalla E."/>
            <person name="Dalrymple B.P."/>
            <person name="de Bono B."/>
            <person name="Della Gatta G."/>
            <person name="di Bernardo D."/>
            <person name="Down T."/>
            <person name="Engstrom P."/>
            <person name="Fagiolini M."/>
            <person name="Faulkner G."/>
            <person name="Fletcher C.F."/>
            <person name="Fukushima T."/>
            <person name="Furuno M."/>
            <person name="Futaki S."/>
            <person name="Gariboldi M."/>
            <person name="Georgii-Hemming P."/>
            <person name="Gingeras T.R."/>
            <person name="Gojobori T."/>
            <person name="Green R.E."/>
            <person name="Gustincich S."/>
            <person name="Harbers M."/>
            <person name="Hayashi Y."/>
            <person name="Hensch T.K."/>
            <person name="Hirokawa N."/>
            <person name="Hill D."/>
            <person name="Huminiecki L."/>
            <person name="Iacono M."/>
            <person name="Ikeo K."/>
            <person name="Iwama A."/>
            <person name="Ishikawa T."/>
            <person name="Jakt M."/>
            <person name="Kanapin A."/>
            <person name="Katoh M."/>
            <person name="Kawasawa Y."/>
            <person name="Kelso J."/>
            <person name="Kitamura H."/>
            <person name="Kitano H."/>
            <person name="Kollias G."/>
            <person name="Krishnan S.P."/>
            <person name="Kruger A."/>
            <person name="Kummerfeld S.K."/>
            <person name="Kurochkin I.V."/>
            <person name="Lareau L.F."/>
            <person name="Lazarevic D."/>
            <person name="Lipovich L."/>
            <person name="Liu J."/>
            <person name="Liuni S."/>
            <person name="McWilliam S."/>
            <person name="Madan Babu M."/>
            <person name="Madera M."/>
            <person name="Marchionni L."/>
            <person name="Matsuda H."/>
            <person name="Matsuzawa S."/>
            <person name="Miki H."/>
            <person name="Mignone F."/>
            <person name="Miyake S."/>
            <person name="Morris K."/>
            <person name="Mottagui-Tabar S."/>
            <person name="Mulder N."/>
            <person name="Nakano N."/>
            <person name="Nakauchi H."/>
            <person name="Ng P."/>
            <person name="Nilsson R."/>
            <person name="Nishiguchi S."/>
            <person name="Nishikawa S."/>
            <person name="Nori F."/>
            <person name="Ohara O."/>
            <person name="Okazaki Y."/>
            <person name="Orlando V."/>
            <person name="Pang K.C."/>
            <person name="Pavan W.J."/>
            <person name="Pavesi G."/>
            <person name="Pesole G."/>
            <person name="Petrovsky N."/>
            <person name="Piazza S."/>
            <person name="Reed J."/>
            <person name="Reid J.F."/>
            <person name="Ring B.Z."/>
            <person name="Ringwald M."/>
            <person name="Rost B."/>
            <person name="Ruan Y."/>
            <person name="Salzberg S.L."/>
            <person name="Sandelin A."/>
            <person name="Schneider C."/>
            <person name="Schoenbach C."/>
            <person name="Sekiguchi K."/>
            <person name="Semple C.A."/>
            <person name="Seno S."/>
            <person name="Sessa L."/>
            <person name="Sheng Y."/>
            <person name="Shibata Y."/>
            <person name="Shimada H."/>
            <person name="Shimada K."/>
            <person name="Silva D."/>
            <person name="Sinclair B."/>
            <person name="Sperling S."/>
            <person name="Stupka E."/>
            <person name="Sugiura K."/>
            <person name="Sultana R."/>
            <person name="Takenaka Y."/>
            <person name="Taki K."/>
            <person name="Tammoja K."/>
            <person name="Tan S.L."/>
            <person name="Tang S."/>
            <person name="Taylor M.S."/>
            <person name="Tegner J."/>
            <person name="Teichmann S.A."/>
            <person name="Ueda H.R."/>
            <person name="van Nimwegen E."/>
            <person name="Verardo R."/>
            <person name="Wei C.L."/>
            <person name="Yagi K."/>
            <person name="Yamanishi H."/>
            <person name="Zabarovsky E."/>
            <person name="Zhu S."/>
            <person name="Zimmer A."/>
            <person name="Hide W."/>
            <person name="Bult C."/>
            <person name="Grimmond S.M."/>
            <person name="Teasdale R.D."/>
            <person name="Liu E.T."/>
            <person name="Brusic V."/>
            <person name="Quackenbush J."/>
            <person name="Wahlestedt C."/>
            <person name="Mattick J.S."/>
            <person name="Hume D.A."/>
            <person name="Kai C."/>
            <person name="Sasaki D."/>
            <person name="Tomaru Y."/>
            <person name="Fukuda S."/>
            <person name="Kanamori-Katayama M."/>
            <person name="Suzuki M."/>
            <person name="Aoki J."/>
            <person name="Arakawa T."/>
            <person name="Iida J."/>
            <person name="Imamura K."/>
            <person name="Itoh M."/>
            <person name="Kato T."/>
            <person name="Kawaji H."/>
            <person name="Kawagashira N."/>
            <person name="Kawashima T."/>
            <person name="Kojima M."/>
            <person name="Kondo S."/>
            <person name="Konno H."/>
            <person name="Nakano K."/>
            <person name="Ninomiya N."/>
            <person name="Nishio T."/>
            <person name="Okada M."/>
            <person name="Plessy C."/>
            <person name="Shibata K."/>
            <person name="Shiraki T."/>
            <person name="Suzuki S."/>
            <person name="Tagami M."/>
            <person name="Waki K."/>
            <person name="Watahiki A."/>
            <person name="Okamura-Oho Y."/>
            <person name="Suzuki H."/>
            <person name="Kawai J."/>
            <person name="Hayashizaki Y."/>
        </authorList>
    </citation>
    <scope>NUCLEOTIDE SEQUENCE [LARGE SCALE MRNA]</scope>
    <source>
        <strain>NOD</strain>
        <tissue>Spleen</tissue>
    </source>
</reference>
<reference key="2">
    <citation type="journal article" date="2009" name="PLoS Biol.">
        <title>Lineage-specific biology revealed by a finished genome assembly of the mouse.</title>
        <authorList>
            <person name="Church D.M."/>
            <person name="Goodstadt L."/>
            <person name="Hillier L.W."/>
            <person name="Zody M.C."/>
            <person name="Goldstein S."/>
            <person name="She X."/>
            <person name="Bult C.J."/>
            <person name="Agarwala R."/>
            <person name="Cherry J.L."/>
            <person name="DiCuccio M."/>
            <person name="Hlavina W."/>
            <person name="Kapustin Y."/>
            <person name="Meric P."/>
            <person name="Maglott D."/>
            <person name="Birtle Z."/>
            <person name="Marques A.C."/>
            <person name="Graves T."/>
            <person name="Zhou S."/>
            <person name="Teague B."/>
            <person name="Potamousis K."/>
            <person name="Churas C."/>
            <person name="Place M."/>
            <person name="Herschleb J."/>
            <person name="Runnheim R."/>
            <person name="Forrest D."/>
            <person name="Amos-Landgraf J."/>
            <person name="Schwartz D.C."/>
            <person name="Cheng Z."/>
            <person name="Lindblad-Toh K."/>
            <person name="Eichler E.E."/>
            <person name="Ponting C.P."/>
        </authorList>
    </citation>
    <scope>NUCLEOTIDE SEQUENCE [LARGE SCALE GENOMIC DNA]</scope>
    <source>
        <strain>C57BL/6J</strain>
    </source>
</reference>
<reference key="3">
    <citation type="journal article" date="2004" name="Genome Res.">
        <title>The status, quality, and expansion of the NIH full-length cDNA project: the Mammalian Gene Collection (MGC).</title>
        <authorList>
            <consortium name="The MGC Project Team"/>
        </authorList>
    </citation>
    <scope>NUCLEOTIDE SEQUENCE [LARGE SCALE MRNA] OF 331-961</scope>
    <source>
        <strain>C57BL/6J</strain>
        <tissue>Brain</tissue>
    </source>
</reference>
<reference key="4">
    <citation type="journal article" date="2004" name="J. Biol. Chem.">
        <title>Identification and characterization of Rain, a novel Ras-interacting protein with a unique subcellular localization.</title>
        <authorList>
            <person name="Mitin N.Y."/>
            <person name="Ramocki M.B."/>
            <person name="Zullo A.J."/>
            <person name="Der C.J."/>
            <person name="Konieczny S.F."/>
            <person name="Taparowsky E.J."/>
        </authorList>
    </citation>
    <scope>TISSUE SPECIFICITY</scope>
</reference>
<reference key="5">
    <citation type="journal article" date="2007" name="Proc. Natl. Acad. Sci. U.S.A.">
        <title>Large-scale phosphorylation analysis of mouse liver.</title>
        <authorList>
            <person name="Villen J."/>
            <person name="Beausoleil S.A."/>
            <person name="Gerber S.A."/>
            <person name="Gygi S.P."/>
        </authorList>
    </citation>
    <scope>PHOSPHORYLATION [LARGE SCALE ANALYSIS] AT SER-322 AND SER-325</scope>
    <scope>IDENTIFICATION BY MASS SPECTROMETRY [LARGE SCALE ANALYSIS]</scope>
    <source>
        <tissue>Liver</tissue>
    </source>
</reference>
<reference key="6">
    <citation type="journal article" date="2009" name="Dev. Biol.">
        <title>Rasip1 is required for endothelial cell motility, angiogenesis and vessel formation.</title>
        <authorList>
            <person name="Xu K."/>
            <person name="Chong D.C."/>
            <person name="Rankin S.A."/>
            <person name="Zorn A.M."/>
            <person name="Cleaver O."/>
        </authorList>
    </citation>
    <scope>FUNCTION</scope>
    <scope>DEVELOPMENTAL STAGE</scope>
</reference>
<reference key="7">
    <citation type="journal article" date="2010" name="Cell">
        <title>A tissue-specific atlas of mouse protein phosphorylation and expression.</title>
        <authorList>
            <person name="Huttlin E.L."/>
            <person name="Jedrychowski M.P."/>
            <person name="Elias J.E."/>
            <person name="Goswami T."/>
            <person name="Rad R."/>
            <person name="Beausoleil S.A."/>
            <person name="Villen J."/>
            <person name="Haas W."/>
            <person name="Sowa M.E."/>
            <person name="Gygi S.P."/>
        </authorList>
    </citation>
    <scope>PHOSPHORYLATION [LARGE SCALE ANALYSIS] AT SER-274; SER-286; SER-320; SER-322; SER-325 AND SER-413</scope>
    <scope>IDENTIFICATION BY MASS SPECTROMETRY [LARGE SCALE ANALYSIS]</scope>
    <source>
        <tissue>Brain</tissue>
        <tissue>Brown adipose tissue</tissue>
        <tissue>Heart</tissue>
        <tissue>Kidney</tissue>
        <tissue>Liver</tissue>
        <tissue>Lung</tissue>
        <tissue>Pancreas</tissue>
        <tissue>Spleen</tissue>
    </source>
</reference>
<reference key="8">
    <citation type="journal article" date="2011" name="Dev. Cell">
        <title>Blood vessel tubulogenesis requires Rasip1 regulation of GTPase signaling.</title>
        <authorList>
            <person name="Xu K."/>
            <person name="Sacharidou A."/>
            <person name="Fu S."/>
            <person name="Chong D.C."/>
            <person name="Skaug B."/>
            <person name="Chen Z.J."/>
            <person name="Davis G.E."/>
            <person name="Cleaver O."/>
        </authorList>
    </citation>
    <scope>FUNCTION</scope>
    <scope>INTERACTION WITH MYH9 AND ARHGAP29</scope>
</reference>
<reference key="9">
    <citation type="journal article" date="2014" name="Mol. Cell. Proteomics">
        <title>Immunoaffinity enrichment and mass spectrometry analysis of protein methylation.</title>
        <authorList>
            <person name="Guo A."/>
            <person name="Gu H."/>
            <person name="Zhou J."/>
            <person name="Mulhern D."/>
            <person name="Wang Y."/>
            <person name="Lee K.A."/>
            <person name="Yang V."/>
            <person name="Aguiar M."/>
            <person name="Kornhauser J."/>
            <person name="Jia X."/>
            <person name="Ren J."/>
            <person name="Beausoleil S.A."/>
            <person name="Silva J.C."/>
            <person name="Vemulapalli V."/>
            <person name="Bedford M.T."/>
            <person name="Comb M.J."/>
        </authorList>
    </citation>
    <scope>METHYLATION [LARGE SCALE ANALYSIS] AT ARG-96</scope>
    <scope>IDENTIFICATION BY MASS SPECTROMETRY [LARGE SCALE ANALYSIS]</scope>
    <source>
        <tissue>Brain</tissue>
        <tissue>Embryo</tissue>
    </source>
</reference>
<protein>
    <recommendedName>
        <fullName>Ras-interacting protein 1</fullName>
        <shortName>Rain</shortName>
    </recommendedName>
</protein>
<feature type="chain" id="PRO_0000097164" description="Ras-interacting protein 1">
    <location>
        <begin position="1"/>
        <end position="961"/>
    </location>
</feature>
<feature type="domain" description="Ras-associating" evidence="2">
    <location>
        <begin position="141"/>
        <end position="253"/>
    </location>
</feature>
<feature type="domain" description="Dilute" evidence="3">
    <location>
        <begin position="594"/>
        <end position="895"/>
    </location>
</feature>
<feature type="region of interest" description="Disordered" evidence="4">
    <location>
        <begin position="1"/>
        <end position="21"/>
    </location>
</feature>
<feature type="region of interest" description="Disordered" evidence="4">
    <location>
        <begin position="35"/>
        <end position="70"/>
    </location>
</feature>
<feature type="region of interest" description="Disordered" evidence="4">
    <location>
        <begin position="96"/>
        <end position="116"/>
    </location>
</feature>
<feature type="region of interest" description="Disordered" evidence="4">
    <location>
        <begin position="261"/>
        <end position="352"/>
    </location>
</feature>
<feature type="compositionally biased region" description="Basic and acidic residues" evidence="4">
    <location>
        <begin position="1"/>
        <end position="10"/>
    </location>
</feature>
<feature type="compositionally biased region" description="Low complexity" evidence="4">
    <location>
        <begin position="41"/>
        <end position="57"/>
    </location>
</feature>
<feature type="compositionally biased region" description="Pro residues" evidence="4">
    <location>
        <begin position="59"/>
        <end position="68"/>
    </location>
</feature>
<feature type="compositionally biased region" description="Gly residues" evidence="4">
    <location>
        <begin position="98"/>
        <end position="110"/>
    </location>
</feature>
<feature type="compositionally biased region" description="Low complexity" evidence="4">
    <location>
        <begin position="284"/>
        <end position="295"/>
    </location>
</feature>
<feature type="compositionally biased region" description="Gly residues" evidence="4">
    <location>
        <begin position="296"/>
        <end position="307"/>
    </location>
</feature>
<feature type="compositionally biased region" description="Low complexity" evidence="4">
    <location>
        <begin position="314"/>
        <end position="327"/>
    </location>
</feature>
<feature type="modified residue" description="Omega-N-methylarginine" evidence="11">
    <location>
        <position position="96"/>
    </location>
</feature>
<feature type="modified residue" description="Phosphoserine" evidence="10">
    <location>
        <position position="274"/>
    </location>
</feature>
<feature type="modified residue" description="Phosphoserine" evidence="10">
    <location>
        <position position="286"/>
    </location>
</feature>
<feature type="modified residue" description="Phosphoserine" evidence="10">
    <location>
        <position position="320"/>
    </location>
</feature>
<feature type="modified residue" description="Phosphoserine" evidence="9 10">
    <location>
        <position position="322"/>
    </location>
</feature>
<feature type="modified residue" description="Phosphoserine" evidence="9 10">
    <location>
        <position position="325"/>
    </location>
</feature>
<feature type="modified residue" description="Phosphoserine" evidence="10">
    <location>
        <position position="413"/>
    </location>
</feature>
<feature type="sequence conflict" description="In Ref. 1; BAE33775." evidence="8" ref="1">
    <original>L</original>
    <variation>M</variation>
    <location>
        <position position="121"/>
    </location>
</feature>
<feature type="sequence conflict" description="In Ref. 1; BAE33775." evidence="8" ref="1">
    <original>M</original>
    <variation>V</variation>
    <location>
        <position position="352"/>
    </location>
</feature>
<gene>
    <name type="primary">Rasip1</name>
</gene>